<sequence length="337" mass="35443">MYSLDFLASKLDGEVKGDKNVEIKKIATLSQAGEGDISFCTNPKYLKALSETKASAVLITEEVLEFCNTNAVVLSNPYMALAKVMELFDKSPRPDGKIHSKAVIAASAIIGENVTIGANAVVGENVVIGDNVYIGACATIDNGTKIGNDTLIKSNVSIAHDVVIGTGCIIHQNAVIGCDGFGNARDEDGSWTKIPQLGRVIIEDDVEIGSGTTVDRGAIDDTIIKKGARIDNLVQIAHNVVIGRNTALAGVTAVAGSTTIGDNCLIGGQSAITGHISICDNTIIGGASNIGKSITKPGMYYAAFEAKPRIQWGRFVAKLAKIDTLITKVKQLEEKIK</sequence>
<protein>
    <recommendedName>
        <fullName evidence="1">UDP-3-O-acylglucosamine N-acyltransferase 2</fullName>
        <ecNumber evidence="1">2.3.1.191</ecNumber>
    </recommendedName>
</protein>
<gene>
    <name evidence="1" type="primary">lpxD2</name>
    <name type="ordered locus">FTL_0537</name>
</gene>
<accession>Q2A4P6</accession>
<evidence type="ECO:0000255" key="1">
    <source>
        <dbReference type="HAMAP-Rule" id="MF_00523"/>
    </source>
</evidence>
<feature type="chain" id="PRO_0000264369" description="UDP-3-O-acylglucosamine N-acyltransferase 2">
    <location>
        <begin position="1"/>
        <end position="337"/>
    </location>
</feature>
<feature type="active site" description="Proton acceptor" evidence="1">
    <location>
        <position position="238"/>
    </location>
</feature>
<keyword id="KW-0012">Acyltransferase</keyword>
<keyword id="KW-0441">Lipid A biosynthesis</keyword>
<keyword id="KW-0444">Lipid biosynthesis</keyword>
<keyword id="KW-0443">Lipid metabolism</keyword>
<keyword id="KW-1185">Reference proteome</keyword>
<keyword id="KW-0677">Repeat</keyword>
<keyword id="KW-0808">Transferase</keyword>
<comment type="function">
    <text evidence="1">Catalyzes the N-acylation of UDP-3-O-acylglucosamine using 3-hydroxyacyl-ACP as the acyl donor. Is involved in the biosynthesis of lipid A, a phosphorylated glycolipid that anchors the lipopolysaccharide to the outer membrane of the cell.</text>
</comment>
<comment type="catalytic activity">
    <reaction evidence="1">
        <text>a UDP-3-O-[(3R)-3-hydroxyacyl]-alpha-D-glucosamine + a (3R)-hydroxyacyl-[ACP] = a UDP-2-N,3-O-bis[(3R)-3-hydroxyacyl]-alpha-D-glucosamine + holo-[ACP] + H(+)</text>
        <dbReference type="Rhea" id="RHEA:53836"/>
        <dbReference type="Rhea" id="RHEA-COMP:9685"/>
        <dbReference type="Rhea" id="RHEA-COMP:9945"/>
        <dbReference type="ChEBI" id="CHEBI:15378"/>
        <dbReference type="ChEBI" id="CHEBI:64479"/>
        <dbReference type="ChEBI" id="CHEBI:78827"/>
        <dbReference type="ChEBI" id="CHEBI:137740"/>
        <dbReference type="ChEBI" id="CHEBI:137748"/>
        <dbReference type="EC" id="2.3.1.191"/>
    </reaction>
</comment>
<comment type="pathway">
    <text evidence="1">Bacterial outer membrane biogenesis; LPS lipid A biosynthesis.</text>
</comment>
<comment type="subunit">
    <text evidence="1">Homotrimer.</text>
</comment>
<comment type="similarity">
    <text evidence="1">Belongs to the transferase hexapeptide repeat family. LpxD subfamily.</text>
</comment>
<name>LPXD2_FRATH</name>
<reference key="1">
    <citation type="submission" date="2006-03" db="EMBL/GenBank/DDBJ databases">
        <title>Complete genome sequence of Francisella tularensis LVS (Live Vaccine Strain).</title>
        <authorList>
            <person name="Chain P."/>
            <person name="Larimer F."/>
            <person name="Land M."/>
            <person name="Stilwagen S."/>
            <person name="Larsson P."/>
            <person name="Bearden S."/>
            <person name="Chu M."/>
            <person name="Oyston P."/>
            <person name="Forsman M."/>
            <person name="Andersson S."/>
            <person name="Lindler L."/>
            <person name="Titball R."/>
            <person name="Garcia E."/>
        </authorList>
    </citation>
    <scope>NUCLEOTIDE SEQUENCE [LARGE SCALE GENOMIC DNA]</scope>
    <source>
        <strain>LVS</strain>
    </source>
</reference>
<proteinExistence type="inferred from homology"/>
<dbReference type="EC" id="2.3.1.191" evidence="1"/>
<dbReference type="EMBL" id="AM233362">
    <property type="protein sequence ID" value="CAJ78977.1"/>
    <property type="molecule type" value="Genomic_DNA"/>
</dbReference>
<dbReference type="SMR" id="Q2A4P6"/>
<dbReference type="KEGG" id="ftl:FTL_0537"/>
<dbReference type="UniPathway" id="UPA00973"/>
<dbReference type="Proteomes" id="UP000001944">
    <property type="component" value="Chromosome"/>
</dbReference>
<dbReference type="GO" id="GO:0016020">
    <property type="term" value="C:membrane"/>
    <property type="evidence" value="ECO:0007669"/>
    <property type="project" value="GOC"/>
</dbReference>
<dbReference type="GO" id="GO:0016410">
    <property type="term" value="F:N-acyltransferase activity"/>
    <property type="evidence" value="ECO:0007669"/>
    <property type="project" value="InterPro"/>
</dbReference>
<dbReference type="GO" id="GO:0009245">
    <property type="term" value="P:lipid A biosynthetic process"/>
    <property type="evidence" value="ECO:0007669"/>
    <property type="project" value="UniProtKB-UniRule"/>
</dbReference>
<dbReference type="CDD" id="cd03352">
    <property type="entry name" value="LbH_LpxD"/>
    <property type="match status" value="1"/>
</dbReference>
<dbReference type="Gene3D" id="2.160.10.10">
    <property type="entry name" value="Hexapeptide repeat proteins"/>
    <property type="match status" value="1"/>
</dbReference>
<dbReference type="Gene3D" id="3.40.1390.10">
    <property type="entry name" value="MurE/MurF, N-terminal domain"/>
    <property type="match status" value="1"/>
</dbReference>
<dbReference type="HAMAP" id="MF_00523">
    <property type="entry name" value="LpxD"/>
    <property type="match status" value="1"/>
</dbReference>
<dbReference type="InterPro" id="IPR001451">
    <property type="entry name" value="Hexapep"/>
</dbReference>
<dbReference type="InterPro" id="IPR018357">
    <property type="entry name" value="Hexapep_transf_CS"/>
</dbReference>
<dbReference type="InterPro" id="IPR007691">
    <property type="entry name" value="LpxD"/>
</dbReference>
<dbReference type="InterPro" id="IPR011004">
    <property type="entry name" value="Trimer_LpxA-like_sf"/>
</dbReference>
<dbReference type="InterPro" id="IPR020573">
    <property type="entry name" value="UDP_GlcNAc_AcTrfase_non-rep"/>
</dbReference>
<dbReference type="NCBIfam" id="TIGR01853">
    <property type="entry name" value="lipid_A_lpxD"/>
    <property type="match status" value="1"/>
</dbReference>
<dbReference type="NCBIfam" id="NF002060">
    <property type="entry name" value="PRK00892.1"/>
    <property type="match status" value="1"/>
</dbReference>
<dbReference type="PANTHER" id="PTHR43378">
    <property type="entry name" value="UDP-3-O-ACYLGLUCOSAMINE N-ACYLTRANSFERASE"/>
    <property type="match status" value="1"/>
</dbReference>
<dbReference type="PANTHER" id="PTHR43378:SF2">
    <property type="entry name" value="UDP-3-O-ACYLGLUCOSAMINE N-ACYLTRANSFERASE 1, MITOCHONDRIAL-RELATED"/>
    <property type="match status" value="1"/>
</dbReference>
<dbReference type="Pfam" id="PF00132">
    <property type="entry name" value="Hexapep"/>
    <property type="match status" value="2"/>
</dbReference>
<dbReference type="Pfam" id="PF14602">
    <property type="entry name" value="Hexapep_2"/>
    <property type="match status" value="1"/>
</dbReference>
<dbReference type="Pfam" id="PF04613">
    <property type="entry name" value="LpxD"/>
    <property type="match status" value="1"/>
</dbReference>
<dbReference type="SUPFAM" id="SSF51161">
    <property type="entry name" value="Trimeric LpxA-like enzymes"/>
    <property type="match status" value="1"/>
</dbReference>
<dbReference type="PROSITE" id="PS00101">
    <property type="entry name" value="HEXAPEP_TRANSFERASES"/>
    <property type="match status" value="2"/>
</dbReference>
<organism>
    <name type="scientific">Francisella tularensis subsp. holarctica (strain LVS)</name>
    <dbReference type="NCBI Taxonomy" id="376619"/>
    <lineage>
        <taxon>Bacteria</taxon>
        <taxon>Pseudomonadati</taxon>
        <taxon>Pseudomonadota</taxon>
        <taxon>Gammaproteobacteria</taxon>
        <taxon>Thiotrichales</taxon>
        <taxon>Francisellaceae</taxon>
        <taxon>Francisella</taxon>
    </lineage>
</organism>